<feature type="chain" id="PRO_1000204741" description="Glycine cleavage system H protein">
    <location>
        <begin position="1"/>
        <end position="124"/>
    </location>
</feature>
<feature type="domain" description="Lipoyl-binding" evidence="2">
    <location>
        <begin position="22"/>
        <end position="104"/>
    </location>
</feature>
<feature type="modified residue" description="N6-lipoyllysine" evidence="1">
    <location>
        <position position="63"/>
    </location>
</feature>
<reference key="1">
    <citation type="journal article" date="2009" name="Stand. Genomic Sci.">
        <title>Complete genome sequence of Beutenbergia cavernae type strain (HKI 0122).</title>
        <authorList>
            <person name="Land M."/>
            <person name="Pukall R."/>
            <person name="Abt B."/>
            <person name="Goker M."/>
            <person name="Rohde M."/>
            <person name="Glavina Del Rio T."/>
            <person name="Tice H."/>
            <person name="Copeland A."/>
            <person name="Cheng J.F."/>
            <person name="Lucas S."/>
            <person name="Chen F."/>
            <person name="Nolan M."/>
            <person name="Bruce D."/>
            <person name="Goodwin L."/>
            <person name="Pitluck S."/>
            <person name="Ivanova N."/>
            <person name="Mavromatis K."/>
            <person name="Ovchinnikova G."/>
            <person name="Pati A."/>
            <person name="Chen A."/>
            <person name="Palaniappan K."/>
            <person name="Hauser L."/>
            <person name="Chang Y.J."/>
            <person name="Jefferies C.C."/>
            <person name="Saunders E."/>
            <person name="Brettin T."/>
            <person name="Detter J.C."/>
            <person name="Han C."/>
            <person name="Chain P."/>
            <person name="Bristow J."/>
            <person name="Eisen J.A."/>
            <person name="Markowitz V."/>
            <person name="Hugenholtz P."/>
            <person name="Kyrpides N.C."/>
            <person name="Klenk H.P."/>
            <person name="Lapidus A."/>
        </authorList>
    </citation>
    <scope>NUCLEOTIDE SEQUENCE [LARGE SCALE GENOMIC DNA]</scope>
    <source>
        <strain>ATCC BAA-8 / DSM 12333 / CCUG 43141 / JCM 11478 / NBRC 16432 / NCIMB 13614 / HKI 0122</strain>
    </source>
</reference>
<comment type="function">
    <text evidence="1">The glycine cleavage system catalyzes the degradation of glycine. The H protein shuttles the methylamine group of glycine from the P protein to the T protein.</text>
</comment>
<comment type="cofactor">
    <cofactor evidence="1">
        <name>(R)-lipoate</name>
        <dbReference type="ChEBI" id="CHEBI:83088"/>
    </cofactor>
    <text evidence="1">Binds 1 lipoyl cofactor covalently.</text>
</comment>
<comment type="subunit">
    <text evidence="1">The glycine cleavage system is composed of four proteins: P, T, L and H.</text>
</comment>
<comment type="similarity">
    <text evidence="1">Belongs to the GcvH family.</text>
</comment>
<organism>
    <name type="scientific">Beutenbergia cavernae (strain ATCC BAA-8 / DSM 12333 / CCUG 43141 / JCM 11478 / NBRC 16432 / NCIMB 13614 / HKI 0122)</name>
    <dbReference type="NCBI Taxonomy" id="471853"/>
    <lineage>
        <taxon>Bacteria</taxon>
        <taxon>Bacillati</taxon>
        <taxon>Actinomycetota</taxon>
        <taxon>Actinomycetes</taxon>
        <taxon>Micrococcales</taxon>
        <taxon>Beutenbergiaceae</taxon>
        <taxon>Beutenbergia</taxon>
    </lineage>
</organism>
<accession>C5C5I0</accession>
<evidence type="ECO:0000255" key="1">
    <source>
        <dbReference type="HAMAP-Rule" id="MF_00272"/>
    </source>
</evidence>
<evidence type="ECO:0000255" key="2">
    <source>
        <dbReference type="PROSITE-ProRule" id="PRU01066"/>
    </source>
</evidence>
<name>GCSH_BEUC1</name>
<proteinExistence type="inferred from homology"/>
<keyword id="KW-0450">Lipoyl</keyword>
<keyword id="KW-1185">Reference proteome</keyword>
<dbReference type="EMBL" id="CP001618">
    <property type="protein sequence ID" value="ACQ80171.1"/>
    <property type="molecule type" value="Genomic_DNA"/>
</dbReference>
<dbReference type="RefSeq" id="WP_015882411.1">
    <property type="nucleotide sequence ID" value="NC_012669.1"/>
</dbReference>
<dbReference type="SMR" id="C5C5I0"/>
<dbReference type="STRING" id="471853.Bcav_1915"/>
<dbReference type="KEGG" id="bcv:Bcav_1915"/>
<dbReference type="eggNOG" id="COG0509">
    <property type="taxonomic scope" value="Bacteria"/>
</dbReference>
<dbReference type="HOGENOM" id="CLU_097408_2_2_11"/>
<dbReference type="OrthoDB" id="9796712at2"/>
<dbReference type="Proteomes" id="UP000007962">
    <property type="component" value="Chromosome"/>
</dbReference>
<dbReference type="GO" id="GO:0005829">
    <property type="term" value="C:cytosol"/>
    <property type="evidence" value="ECO:0007669"/>
    <property type="project" value="TreeGrafter"/>
</dbReference>
<dbReference type="GO" id="GO:0005960">
    <property type="term" value="C:glycine cleavage complex"/>
    <property type="evidence" value="ECO:0007669"/>
    <property type="project" value="InterPro"/>
</dbReference>
<dbReference type="GO" id="GO:0019464">
    <property type="term" value="P:glycine decarboxylation via glycine cleavage system"/>
    <property type="evidence" value="ECO:0007669"/>
    <property type="project" value="UniProtKB-UniRule"/>
</dbReference>
<dbReference type="CDD" id="cd06848">
    <property type="entry name" value="GCS_H"/>
    <property type="match status" value="1"/>
</dbReference>
<dbReference type="Gene3D" id="2.40.50.100">
    <property type="match status" value="1"/>
</dbReference>
<dbReference type="HAMAP" id="MF_00272">
    <property type="entry name" value="GcvH"/>
    <property type="match status" value="1"/>
</dbReference>
<dbReference type="InterPro" id="IPR003016">
    <property type="entry name" value="2-oxoA_DH_lipoyl-BS"/>
</dbReference>
<dbReference type="InterPro" id="IPR000089">
    <property type="entry name" value="Biotin_lipoyl"/>
</dbReference>
<dbReference type="InterPro" id="IPR002930">
    <property type="entry name" value="GCV_H"/>
</dbReference>
<dbReference type="InterPro" id="IPR033753">
    <property type="entry name" value="GCV_H/Fam206"/>
</dbReference>
<dbReference type="InterPro" id="IPR017453">
    <property type="entry name" value="GCV_H_sub"/>
</dbReference>
<dbReference type="InterPro" id="IPR011053">
    <property type="entry name" value="Single_hybrid_motif"/>
</dbReference>
<dbReference type="NCBIfam" id="TIGR00527">
    <property type="entry name" value="gcvH"/>
    <property type="match status" value="1"/>
</dbReference>
<dbReference type="NCBIfam" id="NF002270">
    <property type="entry name" value="PRK01202.1"/>
    <property type="match status" value="1"/>
</dbReference>
<dbReference type="PANTHER" id="PTHR11715">
    <property type="entry name" value="GLYCINE CLEAVAGE SYSTEM H PROTEIN"/>
    <property type="match status" value="1"/>
</dbReference>
<dbReference type="PANTHER" id="PTHR11715:SF3">
    <property type="entry name" value="GLYCINE CLEAVAGE SYSTEM H PROTEIN-RELATED"/>
    <property type="match status" value="1"/>
</dbReference>
<dbReference type="Pfam" id="PF01597">
    <property type="entry name" value="GCV_H"/>
    <property type="match status" value="1"/>
</dbReference>
<dbReference type="SUPFAM" id="SSF51230">
    <property type="entry name" value="Single hybrid motif"/>
    <property type="match status" value="1"/>
</dbReference>
<dbReference type="PROSITE" id="PS50968">
    <property type="entry name" value="BIOTINYL_LIPOYL"/>
    <property type="match status" value="1"/>
</dbReference>
<dbReference type="PROSITE" id="PS00189">
    <property type="entry name" value="LIPOYL"/>
    <property type="match status" value="1"/>
</dbReference>
<protein>
    <recommendedName>
        <fullName evidence="1">Glycine cleavage system H protein</fullName>
    </recommendedName>
</protein>
<sequence>MSVPTDRSYTAEHEWVLVDGSVATVGITEFAAEALGDVVFVQLPDVGAQLTAGEACGEIESTKSVSDLFAPVTGSVIEVNSAIDAGPETVNSDPYGAGWLFRVEIATAGELLDAAAYAALTSGE</sequence>
<gene>
    <name evidence="1" type="primary">gcvH</name>
    <name type="ordered locus">Bcav_1915</name>
</gene>